<dbReference type="EMBL" id="AC012396">
    <property type="protein sequence ID" value="AAG30988.1"/>
    <property type="molecule type" value="Genomic_DNA"/>
</dbReference>
<dbReference type="EMBL" id="CP002684">
    <property type="protein sequence ID" value="AEE35443.1"/>
    <property type="molecule type" value="Genomic_DNA"/>
</dbReference>
<dbReference type="PIR" id="F96759">
    <property type="entry name" value="F96759"/>
</dbReference>
<dbReference type="RefSeq" id="NP_565062.1">
    <property type="nucleotide sequence ID" value="NM_105992.2"/>
</dbReference>
<dbReference type="SMR" id="Q9FX28"/>
<dbReference type="STRING" id="3702.Q9FX28"/>
<dbReference type="GlyCosmos" id="Q9FX28">
    <property type="glycosylation" value="2 sites, No reported glycans"/>
</dbReference>
<dbReference type="GlyGen" id="Q9FX28">
    <property type="glycosylation" value="3 sites"/>
</dbReference>
<dbReference type="PaxDb" id="3702-AT1G73325.1"/>
<dbReference type="ProteomicsDB" id="187823"/>
<dbReference type="EnsemblPlants" id="AT1G73325.1">
    <property type="protein sequence ID" value="AT1G73325.1"/>
    <property type="gene ID" value="AT1G73325"/>
</dbReference>
<dbReference type="GeneID" id="843667"/>
<dbReference type="Gramene" id="AT1G73325.1">
    <property type="protein sequence ID" value="AT1G73325.1"/>
    <property type="gene ID" value="AT1G73325"/>
</dbReference>
<dbReference type="KEGG" id="ath:AT1G73325"/>
<dbReference type="Araport" id="AT1G73325"/>
<dbReference type="TAIR" id="AT1G73325"/>
<dbReference type="eggNOG" id="ENOG502R58H">
    <property type="taxonomic scope" value="Eukaryota"/>
</dbReference>
<dbReference type="HOGENOM" id="CLU_090145_1_1_1"/>
<dbReference type="InParanoid" id="Q9FX28"/>
<dbReference type="OMA" id="SKVWRID"/>
<dbReference type="OrthoDB" id="1872570at2759"/>
<dbReference type="PhylomeDB" id="Q9FX28"/>
<dbReference type="PRO" id="PR:Q9FX28"/>
<dbReference type="Proteomes" id="UP000006548">
    <property type="component" value="Chromosome 1"/>
</dbReference>
<dbReference type="ExpressionAtlas" id="Q9FX28">
    <property type="expression patterns" value="baseline and differential"/>
</dbReference>
<dbReference type="GO" id="GO:0004867">
    <property type="term" value="F:serine-type endopeptidase inhibitor activity"/>
    <property type="evidence" value="ECO:0007669"/>
    <property type="project" value="UniProtKB-KW"/>
</dbReference>
<dbReference type="CDD" id="cd23374">
    <property type="entry name" value="beta-trefoil_STI_CrataBL-like"/>
    <property type="match status" value="1"/>
</dbReference>
<dbReference type="Gene3D" id="2.80.10.50">
    <property type="match status" value="1"/>
</dbReference>
<dbReference type="InterPro" id="IPR011065">
    <property type="entry name" value="Kunitz_inhibitor_STI-like_sf"/>
</dbReference>
<dbReference type="InterPro" id="IPR002160">
    <property type="entry name" value="Prot_inh_Kunz-lg"/>
</dbReference>
<dbReference type="PANTHER" id="PTHR33107:SF13">
    <property type="entry name" value="KUNITZ TRYPSIN INHIBITOR 1-RELATED"/>
    <property type="match status" value="1"/>
</dbReference>
<dbReference type="PANTHER" id="PTHR33107">
    <property type="entry name" value="KUNITZ TRYPSIN INHIBITOR 2"/>
    <property type="match status" value="1"/>
</dbReference>
<dbReference type="Pfam" id="PF00197">
    <property type="entry name" value="Kunitz_legume"/>
    <property type="match status" value="1"/>
</dbReference>
<dbReference type="PRINTS" id="PR00291">
    <property type="entry name" value="KUNITZINHBTR"/>
</dbReference>
<dbReference type="SMART" id="SM00452">
    <property type="entry name" value="STI"/>
    <property type="match status" value="1"/>
</dbReference>
<dbReference type="SUPFAM" id="SSF50386">
    <property type="entry name" value="STI-like"/>
    <property type="match status" value="1"/>
</dbReference>
<feature type="signal peptide" evidence="3">
    <location>
        <begin position="1"/>
        <end position="23"/>
    </location>
</feature>
<feature type="chain" id="PRO_5014312886" description="Kunitz trypsin inhibitor 3">
    <location>
        <begin position="24"/>
        <end position="222"/>
    </location>
</feature>
<feature type="glycosylation site" description="N-linked (GlcNAc...) asparagine" evidence="4">
    <location>
        <position position="65"/>
    </location>
</feature>
<feature type="glycosylation site" description="N-linked (GlcNAc...) asparagine" evidence="4">
    <location>
        <position position="175"/>
    </location>
</feature>
<feature type="disulfide bond" evidence="1">
    <location>
        <begin position="72"/>
        <end position="119"/>
    </location>
</feature>
<feature type="disulfide bond" evidence="1">
    <location>
        <begin position="165"/>
        <end position="173"/>
    </location>
</feature>
<proteinExistence type="evidence at transcript level"/>
<name>KTI3_ARATH</name>
<protein>
    <recommendedName>
        <fullName evidence="6">Kunitz trypsin inhibitor 3</fullName>
        <shortName evidence="6">AtKTI3</shortName>
    </recommendedName>
</protein>
<comment type="function">
    <text evidence="2">Exhibits Kunitz trypsin protease inhibitor activity.</text>
</comment>
<comment type="induction">
    <text evidence="5">Induced by infestation with spider mites.</text>
</comment>
<comment type="similarity">
    <text evidence="7">Belongs to the protease inhibitor I3 (leguminous Kunitz-type inhibitor) family.</text>
</comment>
<evidence type="ECO:0000250" key="1">
    <source>
        <dbReference type="UniProtKB" id="P01070"/>
    </source>
</evidence>
<evidence type="ECO:0000250" key="2">
    <source>
        <dbReference type="UniProtKB" id="Q8RXD5"/>
    </source>
</evidence>
<evidence type="ECO:0000255" key="3"/>
<evidence type="ECO:0000255" key="4">
    <source>
        <dbReference type="PROSITE-ProRule" id="PRU00498"/>
    </source>
</evidence>
<evidence type="ECO:0000269" key="5">
    <source>
    </source>
</evidence>
<evidence type="ECO:0000303" key="6">
    <source>
    </source>
</evidence>
<evidence type="ECO:0000305" key="7"/>
<evidence type="ECO:0000312" key="8">
    <source>
        <dbReference type="Araport" id="AT1G73325"/>
    </source>
</evidence>
<evidence type="ECO:0000312" key="9">
    <source>
        <dbReference type="EMBL" id="AAG30988.1"/>
    </source>
</evidence>
<gene>
    <name evidence="6" type="primary">KTI3</name>
    <name evidence="8" type="ordered locus">At1g73325</name>
    <name evidence="9" type="ORF">T9L24.46</name>
</gene>
<sequence length="222" mass="24309">MEKLTLSFITLTVLSAIFTAASAADATPSQVVLDIAGHPVQSNVQYYIIPAKIGTGGGLIPSNRNLSTQDLCLNLDIVQSSSPFVSGLPVTFSPLNTKVKHVQLSASLNLEFDSTVWLCPDSKVWRIDHSVQLRKSFVSIGGQKGKGNSWFQIQEDGDAYKLMYCPISSIVACINVSLEIDDHGVRRLVLSTDQSFVVKFQKAYDSNSNCNLKSNSRMFLFL</sequence>
<organism>
    <name type="scientific">Arabidopsis thaliana</name>
    <name type="common">Mouse-ear cress</name>
    <dbReference type="NCBI Taxonomy" id="3702"/>
    <lineage>
        <taxon>Eukaryota</taxon>
        <taxon>Viridiplantae</taxon>
        <taxon>Streptophyta</taxon>
        <taxon>Embryophyta</taxon>
        <taxon>Tracheophyta</taxon>
        <taxon>Spermatophyta</taxon>
        <taxon>Magnoliopsida</taxon>
        <taxon>eudicotyledons</taxon>
        <taxon>Gunneridae</taxon>
        <taxon>Pentapetalae</taxon>
        <taxon>rosids</taxon>
        <taxon>malvids</taxon>
        <taxon>Brassicales</taxon>
        <taxon>Brassicaceae</taxon>
        <taxon>Camelineae</taxon>
        <taxon>Arabidopsis</taxon>
    </lineage>
</organism>
<keyword id="KW-1015">Disulfide bond</keyword>
<keyword id="KW-0325">Glycoprotein</keyword>
<keyword id="KW-0646">Protease inhibitor</keyword>
<keyword id="KW-1185">Reference proteome</keyword>
<keyword id="KW-0722">Serine protease inhibitor</keyword>
<keyword id="KW-0732">Signal</keyword>
<reference key="1">
    <citation type="journal article" date="2000" name="Nature">
        <title>Sequence and analysis of chromosome 1 of the plant Arabidopsis thaliana.</title>
        <authorList>
            <person name="Theologis A."/>
            <person name="Ecker J.R."/>
            <person name="Palm C.J."/>
            <person name="Federspiel N.A."/>
            <person name="Kaul S."/>
            <person name="White O."/>
            <person name="Alonso J."/>
            <person name="Altafi H."/>
            <person name="Araujo R."/>
            <person name="Bowman C.L."/>
            <person name="Brooks S.Y."/>
            <person name="Buehler E."/>
            <person name="Chan A."/>
            <person name="Chao Q."/>
            <person name="Chen H."/>
            <person name="Cheuk R.F."/>
            <person name="Chin C.W."/>
            <person name="Chung M.K."/>
            <person name="Conn L."/>
            <person name="Conway A.B."/>
            <person name="Conway A.R."/>
            <person name="Creasy T.H."/>
            <person name="Dewar K."/>
            <person name="Dunn P."/>
            <person name="Etgu P."/>
            <person name="Feldblyum T.V."/>
            <person name="Feng J.-D."/>
            <person name="Fong B."/>
            <person name="Fujii C.Y."/>
            <person name="Gill J.E."/>
            <person name="Goldsmith A.D."/>
            <person name="Haas B."/>
            <person name="Hansen N.F."/>
            <person name="Hughes B."/>
            <person name="Huizar L."/>
            <person name="Hunter J.L."/>
            <person name="Jenkins J."/>
            <person name="Johnson-Hopson C."/>
            <person name="Khan S."/>
            <person name="Khaykin E."/>
            <person name="Kim C.J."/>
            <person name="Koo H.L."/>
            <person name="Kremenetskaia I."/>
            <person name="Kurtz D.B."/>
            <person name="Kwan A."/>
            <person name="Lam B."/>
            <person name="Langin-Hooper S."/>
            <person name="Lee A."/>
            <person name="Lee J.M."/>
            <person name="Lenz C.A."/>
            <person name="Li J.H."/>
            <person name="Li Y.-P."/>
            <person name="Lin X."/>
            <person name="Liu S.X."/>
            <person name="Liu Z.A."/>
            <person name="Luros J.S."/>
            <person name="Maiti R."/>
            <person name="Marziali A."/>
            <person name="Militscher J."/>
            <person name="Miranda M."/>
            <person name="Nguyen M."/>
            <person name="Nierman W.C."/>
            <person name="Osborne B.I."/>
            <person name="Pai G."/>
            <person name="Peterson J."/>
            <person name="Pham P.K."/>
            <person name="Rizzo M."/>
            <person name="Rooney T."/>
            <person name="Rowley D."/>
            <person name="Sakano H."/>
            <person name="Salzberg S.L."/>
            <person name="Schwartz J.R."/>
            <person name="Shinn P."/>
            <person name="Southwick A.M."/>
            <person name="Sun H."/>
            <person name="Tallon L.J."/>
            <person name="Tambunga G."/>
            <person name="Toriumi M.J."/>
            <person name="Town C.D."/>
            <person name="Utterback T."/>
            <person name="Van Aken S."/>
            <person name="Vaysberg M."/>
            <person name="Vysotskaia V.S."/>
            <person name="Walker M."/>
            <person name="Wu D."/>
            <person name="Yu G."/>
            <person name="Fraser C.M."/>
            <person name="Venter J.C."/>
            <person name="Davis R.W."/>
        </authorList>
    </citation>
    <scope>NUCLEOTIDE SEQUENCE [LARGE SCALE GENOMIC DNA]</scope>
    <source>
        <strain>cv. Columbia</strain>
    </source>
</reference>
<reference key="2">
    <citation type="journal article" date="2017" name="Plant J.">
        <title>Araport11: a complete reannotation of the Arabidopsis thaliana reference genome.</title>
        <authorList>
            <person name="Cheng C.Y."/>
            <person name="Krishnakumar V."/>
            <person name="Chan A.P."/>
            <person name="Thibaud-Nissen F."/>
            <person name="Schobel S."/>
            <person name="Town C.D."/>
        </authorList>
    </citation>
    <scope>GENOME REANNOTATION</scope>
    <source>
        <strain>cv. Columbia</strain>
    </source>
</reference>
<reference key="3">
    <citation type="journal article" date="2018" name="Front. Plant Sci.">
        <title>Arabidopsis Kunitz trypsin inhibitors in defense against spider mites.</title>
        <authorList>
            <person name="Arnaiz A."/>
            <person name="Talavera-Mateo L."/>
            <person name="Gonzalez-Melendi P."/>
            <person name="Martinez M."/>
            <person name="Diaz I."/>
            <person name="Santamaria M.E."/>
        </authorList>
    </citation>
    <scope>INDUCTION BY SPIDER MITES</scope>
    <scope>GENE FAMILY</scope>
    <scope>NOMENCLATURE</scope>
</reference>
<accession>Q9FX28</accession>